<dbReference type="EC" id="2.4.2.18" evidence="1"/>
<dbReference type="EMBL" id="CP000884">
    <property type="protein sequence ID" value="ABX33415.1"/>
    <property type="molecule type" value="Genomic_DNA"/>
</dbReference>
<dbReference type="RefSeq" id="WP_012202701.1">
    <property type="nucleotide sequence ID" value="NC_010002.1"/>
</dbReference>
<dbReference type="SMR" id="A9BS05"/>
<dbReference type="STRING" id="398578.Daci_0769"/>
<dbReference type="GeneID" id="24117234"/>
<dbReference type="KEGG" id="dac:Daci_0769"/>
<dbReference type="eggNOG" id="COG0547">
    <property type="taxonomic scope" value="Bacteria"/>
</dbReference>
<dbReference type="HOGENOM" id="CLU_034315_2_1_4"/>
<dbReference type="UniPathway" id="UPA00035">
    <property type="reaction ID" value="UER00041"/>
</dbReference>
<dbReference type="Proteomes" id="UP000000784">
    <property type="component" value="Chromosome"/>
</dbReference>
<dbReference type="GO" id="GO:0005829">
    <property type="term" value="C:cytosol"/>
    <property type="evidence" value="ECO:0007669"/>
    <property type="project" value="TreeGrafter"/>
</dbReference>
<dbReference type="GO" id="GO:0004048">
    <property type="term" value="F:anthranilate phosphoribosyltransferase activity"/>
    <property type="evidence" value="ECO:0007669"/>
    <property type="project" value="UniProtKB-UniRule"/>
</dbReference>
<dbReference type="GO" id="GO:0000287">
    <property type="term" value="F:magnesium ion binding"/>
    <property type="evidence" value="ECO:0007669"/>
    <property type="project" value="UniProtKB-UniRule"/>
</dbReference>
<dbReference type="GO" id="GO:0000162">
    <property type="term" value="P:L-tryptophan biosynthetic process"/>
    <property type="evidence" value="ECO:0007669"/>
    <property type="project" value="UniProtKB-UniRule"/>
</dbReference>
<dbReference type="FunFam" id="1.20.970.10:FF:000006">
    <property type="entry name" value="Anthranilate phosphoribosyltransferase"/>
    <property type="match status" value="1"/>
</dbReference>
<dbReference type="FunFam" id="3.40.1030.10:FF:000002">
    <property type="entry name" value="Anthranilate phosphoribosyltransferase"/>
    <property type="match status" value="1"/>
</dbReference>
<dbReference type="Gene3D" id="3.40.1030.10">
    <property type="entry name" value="Nucleoside phosphorylase/phosphoribosyltransferase catalytic domain"/>
    <property type="match status" value="1"/>
</dbReference>
<dbReference type="Gene3D" id="1.20.970.10">
    <property type="entry name" value="Transferase, Pyrimidine Nucleoside Phosphorylase, Chain C"/>
    <property type="match status" value="1"/>
</dbReference>
<dbReference type="HAMAP" id="MF_00211">
    <property type="entry name" value="TrpD"/>
    <property type="match status" value="1"/>
</dbReference>
<dbReference type="InterPro" id="IPR005940">
    <property type="entry name" value="Anthranilate_Pribosyl_Tfrase"/>
</dbReference>
<dbReference type="InterPro" id="IPR000312">
    <property type="entry name" value="Glycosyl_Trfase_fam3"/>
</dbReference>
<dbReference type="InterPro" id="IPR017459">
    <property type="entry name" value="Glycosyl_Trfase_fam3_N_dom"/>
</dbReference>
<dbReference type="InterPro" id="IPR036320">
    <property type="entry name" value="Glycosyl_Trfase_fam3_N_dom_sf"/>
</dbReference>
<dbReference type="InterPro" id="IPR035902">
    <property type="entry name" value="Nuc_phospho_transferase"/>
</dbReference>
<dbReference type="NCBIfam" id="TIGR01245">
    <property type="entry name" value="trpD"/>
    <property type="match status" value="1"/>
</dbReference>
<dbReference type="PANTHER" id="PTHR43285">
    <property type="entry name" value="ANTHRANILATE PHOSPHORIBOSYLTRANSFERASE"/>
    <property type="match status" value="1"/>
</dbReference>
<dbReference type="PANTHER" id="PTHR43285:SF2">
    <property type="entry name" value="ANTHRANILATE PHOSPHORIBOSYLTRANSFERASE"/>
    <property type="match status" value="1"/>
</dbReference>
<dbReference type="Pfam" id="PF02885">
    <property type="entry name" value="Glycos_trans_3N"/>
    <property type="match status" value="1"/>
</dbReference>
<dbReference type="Pfam" id="PF00591">
    <property type="entry name" value="Glycos_transf_3"/>
    <property type="match status" value="1"/>
</dbReference>
<dbReference type="SUPFAM" id="SSF52418">
    <property type="entry name" value="Nucleoside phosphorylase/phosphoribosyltransferase catalytic domain"/>
    <property type="match status" value="1"/>
</dbReference>
<dbReference type="SUPFAM" id="SSF47648">
    <property type="entry name" value="Nucleoside phosphorylase/phosphoribosyltransferase N-terminal domain"/>
    <property type="match status" value="1"/>
</dbReference>
<accession>A9BS05</accession>
<reference key="1">
    <citation type="submission" date="2007-11" db="EMBL/GenBank/DDBJ databases">
        <title>Complete sequence of Delftia acidovorans DSM 14801 / SPH-1.</title>
        <authorList>
            <person name="Copeland A."/>
            <person name="Lucas S."/>
            <person name="Lapidus A."/>
            <person name="Barry K."/>
            <person name="Glavina del Rio T."/>
            <person name="Dalin E."/>
            <person name="Tice H."/>
            <person name="Pitluck S."/>
            <person name="Lowry S."/>
            <person name="Clum A."/>
            <person name="Schmutz J."/>
            <person name="Larimer F."/>
            <person name="Land M."/>
            <person name="Hauser L."/>
            <person name="Kyrpides N."/>
            <person name="Kim E."/>
            <person name="Schleheck D."/>
            <person name="Richardson P."/>
        </authorList>
    </citation>
    <scope>NUCLEOTIDE SEQUENCE [LARGE SCALE GENOMIC DNA]</scope>
    <source>
        <strain>DSM 14801 / SPH-1</strain>
    </source>
</reference>
<proteinExistence type="inferred from homology"/>
<protein>
    <recommendedName>
        <fullName evidence="1">Anthranilate phosphoribosyltransferase</fullName>
        <ecNumber evidence="1">2.4.2.18</ecNumber>
    </recommendedName>
</protein>
<gene>
    <name evidence="1" type="primary">trpD</name>
    <name type="ordered locus">Daci_0769</name>
</gene>
<keyword id="KW-0028">Amino-acid biosynthesis</keyword>
<keyword id="KW-0057">Aromatic amino acid biosynthesis</keyword>
<keyword id="KW-0328">Glycosyltransferase</keyword>
<keyword id="KW-0460">Magnesium</keyword>
<keyword id="KW-0479">Metal-binding</keyword>
<keyword id="KW-1185">Reference proteome</keyword>
<keyword id="KW-0808">Transferase</keyword>
<keyword id="KW-0822">Tryptophan biosynthesis</keyword>
<comment type="function">
    <text evidence="1">Catalyzes the transfer of the phosphoribosyl group of 5-phosphorylribose-1-pyrophosphate (PRPP) to anthranilate to yield N-(5'-phosphoribosyl)-anthranilate (PRA).</text>
</comment>
<comment type="catalytic activity">
    <reaction evidence="1">
        <text>N-(5-phospho-beta-D-ribosyl)anthranilate + diphosphate = 5-phospho-alpha-D-ribose 1-diphosphate + anthranilate</text>
        <dbReference type="Rhea" id="RHEA:11768"/>
        <dbReference type="ChEBI" id="CHEBI:16567"/>
        <dbReference type="ChEBI" id="CHEBI:18277"/>
        <dbReference type="ChEBI" id="CHEBI:33019"/>
        <dbReference type="ChEBI" id="CHEBI:58017"/>
        <dbReference type="EC" id="2.4.2.18"/>
    </reaction>
</comment>
<comment type="cofactor">
    <cofactor evidence="1">
        <name>Mg(2+)</name>
        <dbReference type="ChEBI" id="CHEBI:18420"/>
    </cofactor>
    <text evidence="1">Binds 2 magnesium ions per monomer.</text>
</comment>
<comment type="pathway">
    <text evidence="1">Amino-acid biosynthesis; L-tryptophan biosynthesis; L-tryptophan from chorismate: step 2/5.</text>
</comment>
<comment type="subunit">
    <text evidence="1">Homodimer.</text>
</comment>
<comment type="similarity">
    <text evidence="1">Belongs to the anthranilate phosphoribosyltransferase family.</text>
</comment>
<sequence>MTQITPQEALQRTIEHREIFHDEMLHLMRLIMRGELSPVMTAAIVTGLRVKKETIGEITAAAEVMREFSNKVHVEDKRHLVDIVGTGGDGANTFNISTCSIFVIAAAGGKVSKHGGRSVSSKSGSADAMEALGVNIQLTPEQIARSIADVGIGFMFAPNHHPAMKNVAPVRKELGVRTIFNILGPLTNPASAPNILMGVFHEDLVGIQVRALQRLGAEHAIVVYGRDGLDEISLGAGTLVGELKDGVVREYEIHPEDFGLRMVGTRAFKVDNPEESKAMLLGVLHGEKSAARDIVCLNAGAALYAANVASSIEDGMARAQAALDSGAALAKLNELVAYTARLTA</sequence>
<organism>
    <name type="scientific">Delftia acidovorans (strain DSM 14801 / SPH-1)</name>
    <dbReference type="NCBI Taxonomy" id="398578"/>
    <lineage>
        <taxon>Bacteria</taxon>
        <taxon>Pseudomonadati</taxon>
        <taxon>Pseudomonadota</taxon>
        <taxon>Betaproteobacteria</taxon>
        <taxon>Burkholderiales</taxon>
        <taxon>Comamonadaceae</taxon>
        <taxon>Delftia</taxon>
    </lineage>
</organism>
<feature type="chain" id="PRO_1000099797" description="Anthranilate phosphoribosyltransferase">
    <location>
        <begin position="1"/>
        <end position="344"/>
    </location>
</feature>
<feature type="binding site" evidence="1">
    <location>
        <position position="85"/>
    </location>
    <ligand>
        <name>5-phospho-alpha-D-ribose 1-diphosphate</name>
        <dbReference type="ChEBI" id="CHEBI:58017"/>
    </ligand>
</feature>
<feature type="binding site" evidence="1">
    <location>
        <position position="85"/>
    </location>
    <ligand>
        <name>anthranilate</name>
        <dbReference type="ChEBI" id="CHEBI:16567"/>
        <label>1</label>
    </ligand>
</feature>
<feature type="binding site" evidence="1">
    <location>
        <begin position="88"/>
        <end position="89"/>
    </location>
    <ligand>
        <name>5-phospho-alpha-D-ribose 1-diphosphate</name>
        <dbReference type="ChEBI" id="CHEBI:58017"/>
    </ligand>
</feature>
<feature type="binding site" evidence="1">
    <location>
        <position position="93"/>
    </location>
    <ligand>
        <name>5-phospho-alpha-D-ribose 1-diphosphate</name>
        <dbReference type="ChEBI" id="CHEBI:58017"/>
    </ligand>
</feature>
<feature type="binding site" evidence="1">
    <location>
        <begin position="95"/>
        <end position="98"/>
    </location>
    <ligand>
        <name>5-phospho-alpha-D-ribose 1-diphosphate</name>
        <dbReference type="ChEBI" id="CHEBI:58017"/>
    </ligand>
</feature>
<feature type="binding site" evidence="1">
    <location>
        <position position="97"/>
    </location>
    <ligand>
        <name>Mg(2+)</name>
        <dbReference type="ChEBI" id="CHEBI:18420"/>
        <label>1</label>
    </ligand>
</feature>
<feature type="binding site" evidence="1">
    <location>
        <begin position="113"/>
        <end position="121"/>
    </location>
    <ligand>
        <name>5-phospho-alpha-D-ribose 1-diphosphate</name>
        <dbReference type="ChEBI" id="CHEBI:58017"/>
    </ligand>
</feature>
<feature type="binding site" evidence="1">
    <location>
        <position position="125"/>
    </location>
    <ligand>
        <name>5-phospho-alpha-D-ribose 1-diphosphate</name>
        <dbReference type="ChEBI" id="CHEBI:58017"/>
    </ligand>
</feature>
<feature type="binding site" evidence="1">
    <location>
        <position position="171"/>
    </location>
    <ligand>
        <name>anthranilate</name>
        <dbReference type="ChEBI" id="CHEBI:16567"/>
        <label>2</label>
    </ligand>
</feature>
<feature type="binding site" evidence="1">
    <location>
        <position position="230"/>
    </location>
    <ligand>
        <name>Mg(2+)</name>
        <dbReference type="ChEBI" id="CHEBI:18420"/>
        <label>2</label>
    </ligand>
</feature>
<feature type="binding site" evidence="1">
    <location>
        <position position="231"/>
    </location>
    <ligand>
        <name>Mg(2+)</name>
        <dbReference type="ChEBI" id="CHEBI:18420"/>
        <label>1</label>
    </ligand>
</feature>
<feature type="binding site" evidence="1">
    <location>
        <position position="231"/>
    </location>
    <ligand>
        <name>Mg(2+)</name>
        <dbReference type="ChEBI" id="CHEBI:18420"/>
        <label>2</label>
    </ligand>
</feature>
<name>TRPD_DELAS</name>
<evidence type="ECO:0000255" key="1">
    <source>
        <dbReference type="HAMAP-Rule" id="MF_00211"/>
    </source>
</evidence>